<dbReference type="EMBL" id="CP000096">
    <property type="protein sequence ID" value="ABB23929.1"/>
    <property type="molecule type" value="Genomic_DNA"/>
</dbReference>
<dbReference type="RefSeq" id="WP_011357801.1">
    <property type="nucleotide sequence ID" value="NC_007512.1"/>
</dbReference>
<dbReference type="SMR" id="Q3B402"/>
<dbReference type="STRING" id="319225.Plut_1067"/>
<dbReference type="KEGG" id="plt:Plut_1067"/>
<dbReference type="eggNOG" id="COG0356">
    <property type="taxonomic scope" value="Bacteria"/>
</dbReference>
<dbReference type="HOGENOM" id="CLU_041018_2_2_10"/>
<dbReference type="OrthoDB" id="9789241at2"/>
<dbReference type="Proteomes" id="UP000002709">
    <property type="component" value="Chromosome"/>
</dbReference>
<dbReference type="GO" id="GO:0005886">
    <property type="term" value="C:plasma membrane"/>
    <property type="evidence" value="ECO:0007669"/>
    <property type="project" value="UniProtKB-SubCell"/>
</dbReference>
<dbReference type="GO" id="GO:0045259">
    <property type="term" value="C:proton-transporting ATP synthase complex"/>
    <property type="evidence" value="ECO:0007669"/>
    <property type="project" value="UniProtKB-KW"/>
</dbReference>
<dbReference type="GO" id="GO:0046933">
    <property type="term" value="F:proton-transporting ATP synthase activity, rotational mechanism"/>
    <property type="evidence" value="ECO:0007669"/>
    <property type="project" value="UniProtKB-UniRule"/>
</dbReference>
<dbReference type="GO" id="GO:0042777">
    <property type="term" value="P:proton motive force-driven plasma membrane ATP synthesis"/>
    <property type="evidence" value="ECO:0007669"/>
    <property type="project" value="TreeGrafter"/>
</dbReference>
<dbReference type="CDD" id="cd00310">
    <property type="entry name" value="ATP-synt_Fo_a_6"/>
    <property type="match status" value="1"/>
</dbReference>
<dbReference type="Gene3D" id="1.20.120.220">
    <property type="entry name" value="ATP synthase, F0 complex, subunit A"/>
    <property type="match status" value="1"/>
</dbReference>
<dbReference type="HAMAP" id="MF_01393">
    <property type="entry name" value="ATP_synth_a_bact"/>
    <property type="match status" value="1"/>
</dbReference>
<dbReference type="InterPro" id="IPR017692">
    <property type="entry name" value="Alt_ATP_synth_F0_Asu"/>
</dbReference>
<dbReference type="InterPro" id="IPR045082">
    <property type="entry name" value="ATP_syn_F0_a_bact/chloroplast"/>
</dbReference>
<dbReference type="InterPro" id="IPR000568">
    <property type="entry name" value="ATP_synth_F0_asu"/>
</dbReference>
<dbReference type="InterPro" id="IPR023011">
    <property type="entry name" value="ATP_synth_F0_asu_AS"/>
</dbReference>
<dbReference type="InterPro" id="IPR035908">
    <property type="entry name" value="F0_ATP_A_sf"/>
</dbReference>
<dbReference type="NCBIfam" id="TIGR03306">
    <property type="entry name" value="altF1_A"/>
    <property type="match status" value="1"/>
</dbReference>
<dbReference type="NCBIfam" id="TIGR01131">
    <property type="entry name" value="ATP_synt_6_or_A"/>
    <property type="match status" value="1"/>
</dbReference>
<dbReference type="NCBIfam" id="NF004481">
    <property type="entry name" value="PRK05815.2-3"/>
    <property type="match status" value="1"/>
</dbReference>
<dbReference type="PANTHER" id="PTHR42823">
    <property type="entry name" value="ATP SYNTHASE SUBUNIT A, CHLOROPLASTIC"/>
    <property type="match status" value="1"/>
</dbReference>
<dbReference type="PANTHER" id="PTHR42823:SF3">
    <property type="entry name" value="ATP SYNTHASE SUBUNIT A, CHLOROPLASTIC"/>
    <property type="match status" value="1"/>
</dbReference>
<dbReference type="Pfam" id="PF00119">
    <property type="entry name" value="ATP-synt_A"/>
    <property type="match status" value="1"/>
</dbReference>
<dbReference type="PRINTS" id="PR00123">
    <property type="entry name" value="ATPASEA"/>
</dbReference>
<dbReference type="SUPFAM" id="SSF81336">
    <property type="entry name" value="F1F0 ATP synthase subunit A"/>
    <property type="match status" value="1"/>
</dbReference>
<dbReference type="PROSITE" id="PS00449">
    <property type="entry name" value="ATPASE_A"/>
    <property type="match status" value="1"/>
</dbReference>
<accession>Q3B402</accession>
<sequence>MHLSGDEIIIWQHGFVKLNLTIATTWALMLVLVGGSAFASRRLSNGMHRPRWQNVLEIIVGMARRQIEEVGLRRSMQYLPYLGTLFIFIAFSNLCTIIPGYEPPTGSLSTTAALAMSVFVAVPLFGIAESGLGGYLSTYVKPTPIMLPFNIISELSRTLALAVRLFGNIMSGSMILAILLTVTPFVFPVLMSVLGLLTGMVQAYIFSILATVYISAATRARKE</sequence>
<protein>
    <recommendedName>
        <fullName evidence="1">ATP synthase subunit a 1</fullName>
    </recommendedName>
    <alternativeName>
        <fullName evidence="1">ATP synthase F0 sector subunit a 1</fullName>
    </alternativeName>
    <alternativeName>
        <fullName evidence="1">F-ATPase subunit 6 1</fullName>
    </alternativeName>
</protein>
<feature type="chain" id="PRO_0000362370" description="ATP synthase subunit a 1">
    <location>
        <begin position="1"/>
        <end position="223"/>
    </location>
</feature>
<feature type="transmembrane region" description="Helical" evidence="1">
    <location>
        <begin position="20"/>
        <end position="40"/>
    </location>
</feature>
<feature type="transmembrane region" description="Helical" evidence="1">
    <location>
        <begin position="78"/>
        <end position="98"/>
    </location>
</feature>
<feature type="transmembrane region" description="Helical" evidence="1">
    <location>
        <begin position="108"/>
        <end position="128"/>
    </location>
</feature>
<feature type="transmembrane region" description="Helical" evidence="1">
    <location>
        <begin position="174"/>
        <end position="194"/>
    </location>
</feature>
<feature type="transmembrane region" description="Helical" evidence="1">
    <location>
        <begin position="196"/>
        <end position="216"/>
    </location>
</feature>
<name>ATP61_CHLL3</name>
<keyword id="KW-0066">ATP synthesis</keyword>
<keyword id="KW-0997">Cell inner membrane</keyword>
<keyword id="KW-1003">Cell membrane</keyword>
<keyword id="KW-0138">CF(0)</keyword>
<keyword id="KW-0375">Hydrogen ion transport</keyword>
<keyword id="KW-0406">Ion transport</keyword>
<keyword id="KW-0472">Membrane</keyword>
<keyword id="KW-1185">Reference proteome</keyword>
<keyword id="KW-0812">Transmembrane</keyword>
<keyword id="KW-1133">Transmembrane helix</keyword>
<keyword id="KW-0813">Transport</keyword>
<evidence type="ECO:0000255" key="1">
    <source>
        <dbReference type="HAMAP-Rule" id="MF_01393"/>
    </source>
</evidence>
<gene>
    <name evidence="1" type="primary">atpB1</name>
    <name type="ordered locus">Plut_1067</name>
</gene>
<comment type="function">
    <text evidence="1">Key component of the proton channel; it plays a direct role in the translocation of protons across the membrane.</text>
</comment>
<comment type="subunit">
    <text evidence="1">F-type ATPases have 2 components, CF(1) - the catalytic core - and CF(0) - the membrane proton channel. CF(1) has five subunits: alpha(3), beta(3), gamma(1), delta(1), epsilon(1). CF(0) has four main subunits: a, b, b' and c.</text>
</comment>
<comment type="subcellular location">
    <subcellularLocation>
        <location evidence="1">Cell inner membrane</location>
        <topology evidence="1">Multi-pass membrane protein</topology>
    </subcellularLocation>
</comment>
<comment type="similarity">
    <text evidence="1">Belongs to the ATPase A chain family.</text>
</comment>
<reference key="1">
    <citation type="submission" date="2005-08" db="EMBL/GenBank/DDBJ databases">
        <title>Complete sequence of Pelodictyon luteolum DSM 273.</title>
        <authorList>
            <consortium name="US DOE Joint Genome Institute"/>
            <person name="Copeland A."/>
            <person name="Lucas S."/>
            <person name="Lapidus A."/>
            <person name="Barry K."/>
            <person name="Detter J.C."/>
            <person name="Glavina T."/>
            <person name="Hammon N."/>
            <person name="Israni S."/>
            <person name="Pitluck S."/>
            <person name="Bryant D."/>
            <person name="Schmutz J."/>
            <person name="Larimer F."/>
            <person name="Land M."/>
            <person name="Kyrpides N."/>
            <person name="Ivanova N."/>
            <person name="Richardson P."/>
        </authorList>
    </citation>
    <scope>NUCLEOTIDE SEQUENCE [LARGE SCALE GENOMIC DNA]</scope>
    <source>
        <strain>DSM 273 / BCRC 81028 / 2530</strain>
    </source>
</reference>
<proteinExistence type="inferred from homology"/>
<organism>
    <name type="scientific">Chlorobium luteolum (strain DSM 273 / BCRC 81028 / 2530)</name>
    <name type="common">Pelodictyon luteolum</name>
    <dbReference type="NCBI Taxonomy" id="319225"/>
    <lineage>
        <taxon>Bacteria</taxon>
        <taxon>Pseudomonadati</taxon>
        <taxon>Chlorobiota</taxon>
        <taxon>Chlorobiia</taxon>
        <taxon>Chlorobiales</taxon>
        <taxon>Chlorobiaceae</taxon>
        <taxon>Chlorobium/Pelodictyon group</taxon>
        <taxon>Pelodictyon</taxon>
    </lineage>
</organism>